<sequence>MLNLNELKSGFHYFVMGWHFITQKGLRRFVIMPIVLNTILLCGLFWLFISQISSAIDWMMNFIPDWLSFLSVILLTLSILTILLLFYFTFTTFSGFIAAPFNGLLAEKVEKMLTGENINDDGLVDIMRDVPRMLAREWQKLRYSLPKIIALFLLSFIPLVGQTIVPVLTFLFTCWMMAIQYCDYPFDNHKVSFDIMKNALGNQRTQSLTFGGLVTCCTFVPVINLLIMPVAVCGATLMWVENYRNDLGFNMNRSFSSQTGLDVRSENTGIVK</sequence>
<organism>
    <name type="scientific">Haemophilus influenzae (strain PittGG)</name>
    <dbReference type="NCBI Taxonomy" id="374931"/>
    <lineage>
        <taxon>Bacteria</taxon>
        <taxon>Pseudomonadati</taxon>
        <taxon>Pseudomonadota</taxon>
        <taxon>Gammaproteobacteria</taxon>
        <taxon>Pasteurellales</taxon>
        <taxon>Pasteurellaceae</taxon>
        <taxon>Haemophilus</taxon>
    </lineage>
</organism>
<feature type="chain" id="PRO_1000013714" description="Sulfate transporter CysZ">
    <location>
        <begin position="1"/>
        <end position="272"/>
    </location>
</feature>
<feature type="transmembrane region" description="Helical" evidence="1">
    <location>
        <begin position="29"/>
        <end position="49"/>
    </location>
</feature>
<feature type="transmembrane region" description="Helical" evidence="1">
    <location>
        <begin position="66"/>
        <end position="86"/>
    </location>
</feature>
<feature type="transmembrane region" description="Helical" evidence="1">
    <location>
        <begin position="148"/>
        <end position="168"/>
    </location>
</feature>
<feature type="transmembrane region" description="Helical" evidence="1">
    <location>
        <begin position="219"/>
        <end position="239"/>
    </location>
</feature>
<evidence type="ECO:0000255" key="1">
    <source>
        <dbReference type="HAMAP-Rule" id="MF_00468"/>
    </source>
</evidence>
<dbReference type="EMBL" id="CP000672">
    <property type="protein sequence ID" value="ABR00634.1"/>
    <property type="molecule type" value="Genomic_DNA"/>
</dbReference>
<dbReference type="SMR" id="A5UIM8"/>
<dbReference type="KEGG" id="hiq:CGSHiGG_09160"/>
<dbReference type="HOGENOM" id="CLU_070331_1_0_6"/>
<dbReference type="Proteomes" id="UP000001990">
    <property type="component" value="Chromosome"/>
</dbReference>
<dbReference type="GO" id="GO:0005886">
    <property type="term" value="C:plasma membrane"/>
    <property type="evidence" value="ECO:0007669"/>
    <property type="project" value="UniProtKB-SubCell"/>
</dbReference>
<dbReference type="GO" id="GO:0009675">
    <property type="term" value="F:high-affinity sulfate:proton symporter activity"/>
    <property type="evidence" value="ECO:0007669"/>
    <property type="project" value="TreeGrafter"/>
</dbReference>
<dbReference type="GO" id="GO:0019344">
    <property type="term" value="P:cysteine biosynthetic process"/>
    <property type="evidence" value="ECO:0007669"/>
    <property type="project" value="UniProtKB-UniRule"/>
</dbReference>
<dbReference type="GO" id="GO:0000103">
    <property type="term" value="P:sulfate assimilation"/>
    <property type="evidence" value="ECO:0007669"/>
    <property type="project" value="InterPro"/>
</dbReference>
<dbReference type="HAMAP" id="MF_00468">
    <property type="entry name" value="CysZ"/>
    <property type="match status" value="1"/>
</dbReference>
<dbReference type="InterPro" id="IPR050480">
    <property type="entry name" value="CysZ_sulfate_transptr"/>
</dbReference>
<dbReference type="InterPro" id="IPR022985">
    <property type="entry name" value="Sulfate_CysZ"/>
</dbReference>
<dbReference type="NCBIfam" id="NF003433">
    <property type="entry name" value="PRK04949.1"/>
    <property type="match status" value="1"/>
</dbReference>
<dbReference type="PANTHER" id="PTHR37468">
    <property type="entry name" value="SULFATE TRANSPORTER CYSZ"/>
    <property type="match status" value="1"/>
</dbReference>
<dbReference type="PANTHER" id="PTHR37468:SF1">
    <property type="entry name" value="SULFATE TRANSPORTER CYSZ"/>
    <property type="match status" value="1"/>
</dbReference>
<dbReference type="Pfam" id="PF07264">
    <property type="entry name" value="EI24"/>
    <property type="match status" value="1"/>
</dbReference>
<comment type="function">
    <text evidence="1">High affinity, high specificity proton-dependent sulfate transporter, which mediates sulfate uptake. Provides the sulfur source for the cysteine synthesis pathway.</text>
</comment>
<comment type="subcellular location">
    <subcellularLocation>
        <location evidence="1">Cell inner membrane</location>
        <topology evidence="1">Multi-pass membrane protein</topology>
    </subcellularLocation>
</comment>
<comment type="similarity">
    <text evidence="1">Belongs to the CysZ family.</text>
</comment>
<gene>
    <name evidence="1" type="primary">cysZ</name>
    <name type="ordered locus">CGSHiGG_09160</name>
</gene>
<name>CYSZ_HAEIG</name>
<proteinExistence type="inferred from homology"/>
<keyword id="KW-0028">Amino-acid biosynthesis</keyword>
<keyword id="KW-0997">Cell inner membrane</keyword>
<keyword id="KW-1003">Cell membrane</keyword>
<keyword id="KW-0198">Cysteine biosynthesis</keyword>
<keyword id="KW-0472">Membrane</keyword>
<keyword id="KW-0764">Sulfate transport</keyword>
<keyword id="KW-0812">Transmembrane</keyword>
<keyword id="KW-1133">Transmembrane helix</keyword>
<keyword id="KW-0813">Transport</keyword>
<protein>
    <recommendedName>
        <fullName evidence="1">Sulfate transporter CysZ</fullName>
    </recommendedName>
</protein>
<reference key="1">
    <citation type="journal article" date="2007" name="Genome Biol.">
        <title>Characterization and modeling of the Haemophilus influenzae core and supragenomes based on the complete genomic sequences of Rd and 12 clinical nontypeable strains.</title>
        <authorList>
            <person name="Hogg J.S."/>
            <person name="Hu F.Z."/>
            <person name="Janto B."/>
            <person name="Boissy R."/>
            <person name="Hayes J."/>
            <person name="Keefe R."/>
            <person name="Post J.C."/>
            <person name="Ehrlich G.D."/>
        </authorList>
    </citation>
    <scope>NUCLEOTIDE SEQUENCE [LARGE SCALE GENOMIC DNA]</scope>
    <source>
        <strain>PittGG</strain>
    </source>
</reference>
<accession>A5UIM8</accession>